<comment type="function">
    <text evidence="1">Involved in mRNA degradation. Catalyzes the phosphorolysis of single-stranded polyribonucleotides processively in the 3'- to 5'-direction.</text>
</comment>
<comment type="catalytic activity">
    <reaction evidence="1">
        <text>RNA(n+1) + phosphate = RNA(n) + a ribonucleoside 5'-diphosphate</text>
        <dbReference type="Rhea" id="RHEA:22096"/>
        <dbReference type="Rhea" id="RHEA-COMP:14527"/>
        <dbReference type="Rhea" id="RHEA-COMP:17342"/>
        <dbReference type="ChEBI" id="CHEBI:43474"/>
        <dbReference type="ChEBI" id="CHEBI:57930"/>
        <dbReference type="ChEBI" id="CHEBI:140395"/>
        <dbReference type="EC" id="2.7.7.8"/>
    </reaction>
</comment>
<comment type="cofactor">
    <cofactor evidence="1">
        <name>Mg(2+)</name>
        <dbReference type="ChEBI" id="CHEBI:18420"/>
    </cofactor>
</comment>
<comment type="subcellular location">
    <subcellularLocation>
        <location evidence="1">Cytoplasm</location>
    </subcellularLocation>
</comment>
<comment type="similarity">
    <text evidence="1">Belongs to the polyribonucleotide nucleotidyltransferase family.</text>
</comment>
<sequence length="719" mass="77372">MFNKVTKTFQYGQHSVVLETGEMARQASGAVLVSVEDTVVLATVVAAKKAKAGQDFFPLTVDYIEKTYAAGRIPGGFFKREGKPSEKETLTSRLIDRPLRPLFPEGFYNDVQVVIHTLSVNPDIDPDIPAMIGASAALAISGIPFNGPIGAARVGYVDGQYVLNPTATQLKSSKMDLVVAGTENAVLMVESEAKQLSEEIMLGGVVFGHEQMQTAINAIHDLVRDAGKPDWDWQPAPKNEALIAAVSAAAQEGLNAAYQIREKQARTTKLREVYAAVQAAMAEQAAQAGQPAPDSVGVDNILFDLEARIVRSQILNGEPRIDGRDTRTVRPISIRLGVLPRAHGSALFTRGETQALVVATLGTKQDEQIIDALMGEYRDRFMLHYNMPPFATGETGRIGVPKRREIGHGRLAKRALLPLLPAPEDFQYTIRLVSEITESNGSSSMASVCGGSLAMMDAGVPTNDHVAGVAMGLILDSGKFAVLTDILGDEDHLGDMDFKVAGTETGITALQMDIKIQGITKEIMQVALAQAREGRLHILGKMRDALEGSRTELSAFAPRMLTIKINPEKIRDVIGKGGATIRALTEETGTQIDISDDGTIVIASVDETQAKEAQRRIVELTADVEVGQIYDGSVLRLLDFGAIVQVLPGRDGLLHISEIANYRIANINDVLKVGQPVRVKVIEADDKGRLRLSIKAIGGIEQQQSGTAEPAAQSEPQAE</sequence>
<accession>Q7WCQ0</accession>
<name>PNP_BORBR</name>
<feature type="chain" id="PRO_0000329536" description="Polyribonucleotide nucleotidyltransferase">
    <location>
        <begin position="1"/>
        <end position="719"/>
    </location>
</feature>
<feature type="domain" description="KH" evidence="1">
    <location>
        <begin position="558"/>
        <end position="617"/>
    </location>
</feature>
<feature type="domain" description="S1 motif" evidence="1">
    <location>
        <begin position="627"/>
        <end position="695"/>
    </location>
</feature>
<feature type="binding site" evidence="1">
    <location>
        <position position="491"/>
    </location>
    <ligand>
        <name>Mg(2+)</name>
        <dbReference type="ChEBI" id="CHEBI:18420"/>
    </ligand>
</feature>
<feature type="binding site" evidence="1">
    <location>
        <position position="497"/>
    </location>
    <ligand>
        <name>Mg(2+)</name>
        <dbReference type="ChEBI" id="CHEBI:18420"/>
    </ligand>
</feature>
<reference key="1">
    <citation type="journal article" date="2003" name="Nat. Genet.">
        <title>Comparative analysis of the genome sequences of Bordetella pertussis, Bordetella parapertussis and Bordetella bronchiseptica.</title>
        <authorList>
            <person name="Parkhill J."/>
            <person name="Sebaihia M."/>
            <person name="Preston A."/>
            <person name="Murphy L.D."/>
            <person name="Thomson N.R."/>
            <person name="Harris D.E."/>
            <person name="Holden M.T.G."/>
            <person name="Churcher C.M."/>
            <person name="Bentley S.D."/>
            <person name="Mungall K.L."/>
            <person name="Cerdeno-Tarraga A.-M."/>
            <person name="Temple L."/>
            <person name="James K.D."/>
            <person name="Harris B."/>
            <person name="Quail M.A."/>
            <person name="Achtman M."/>
            <person name="Atkin R."/>
            <person name="Baker S."/>
            <person name="Basham D."/>
            <person name="Bason N."/>
            <person name="Cherevach I."/>
            <person name="Chillingworth T."/>
            <person name="Collins M."/>
            <person name="Cronin A."/>
            <person name="Davis P."/>
            <person name="Doggett J."/>
            <person name="Feltwell T."/>
            <person name="Goble A."/>
            <person name="Hamlin N."/>
            <person name="Hauser H."/>
            <person name="Holroyd S."/>
            <person name="Jagels K."/>
            <person name="Leather S."/>
            <person name="Moule S."/>
            <person name="Norberczak H."/>
            <person name="O'Neil S."/>
            <person name="Ormond D."/>
            <person name="Price C."/>
            <person name="Rabbinowitsch E."/>
            <person name="Rutter S."/>
            <person name="Sanders M."/>
            <person name="Saunders D."/>
            <person name="Seeger K."/>
            <person name="Sharp S."/>
            <person name="Simmonds M."/>
            <person name="Skelton J."/>
            <person name="Squares R."/>
            <person name="Squares S."/>
            <person name="Stevens K."/>
            <person name="Unwin L."/>
            <person name="Whitehead S."/>
            <person name="Barrell B.G."/>
            <person name="Maskell D.J."/>
        </authorList>
    </citation>
    <scope>NUCLEOTIDE SEQUENCE [LARGE SCALE GENOMIC DNA]</scope>
    <source>
        <strain>ATCC BAA-588 / NCTC 13252 / RB50</strain>
    </source>
</reference>
<gene>
    <name evidence="1" type="primary">pnp</name>
    <name type="ordered locus">BB3881</name>
</gene>
<organism>
    <name type="scientific">Bordetella bronchiseptica (strain ATCC BAA-588 / NCTC 13252 / RB50)</name>
    <name type="common">Alcaligenes bronchisepticus</name>
    <dbReference type="NCBI Taxonomy" id="257310"/>
    <lineage>
        <taxon>Bacteria</taxon>
        <taxon>Pseudomonadati</taxon>
        <taxon>Pseudomonadota</taxon>
        <taxon>Betaproteobacteria</taxon>
        <taxon>Burkholderiales</taxon>
        <taxon>Alcaligenaceae</taxon>
        <taxon>Bordetella</taxon>
    </lineage>
</organism>
<evidence type="ECO:0000255" key="1">
    <source>
        <dbReference type="HAMAP-Rule" id="MF_01595"/>
    </source>
</evidence>
<proteinExistence type="inferred from homology"/>
<dbReference type="EC" id="2.7.7.8" evidence="1"/>
<dbReference type="EMBL" id="BX640448">
    <property type="protein sequence ID" value="CAE35855.1"/>
    <property type="molecule type" value="Genomic_DNA"/>
</dbReference>
<dbReference type="RefSeq" id="WP_003814001.1">
    <property type="nucleotide sequence ID" value="NC_002927.3"/>
</dbReference>
<dbReference type="SMR" id="Q7WCQ0"/>
<dbReference type="KEGG" id="bbr:BB3881"/>
<dbReference type="eggNOG" id="COG1185">
    <property type="taxonomic scope" value="Bacteria"/>
</dbReference>
<dbReference type="HOGENOM" id="CLU_004217_2_2_4"/>
<dbReference type="Proteomes" id="UP000001027">
    <property type="component" value="Chromosome"/>
</dbReference>
<dbReference type="GO" id="GO:0005829">
    <property type="term" value="C:cytosol"/>
    <property type="evidence" value="ECO:0007669"/>
    <property type="project" value="TreeGrafter"/>
</dbReference>
<dbReference type="GO" id="GO:0000175">
    <property type="term" value="F:3'-5'-RNA exonuclease activity"/>
    <property type="evidence" value="ECO:0007669"/>
    <property type="project" value="TreeGrafter"/>
</dbReference>
<dbReference type="GO" id="GO:0000287">
    <property type="term" value="F:magnesium ion binding"/>
    <property type="evidence" value="ECO:0007669"/>
    <property type="project" value="UniProtKB-UniRule"/>
</dbReference>
<dbReference type="GO" id="GO:0004654">
    <property type="term" value="F:polyribonucleotide nucleotidyltransferase activity"/>
    <property type="evidence" value="ECO:0007669"/>
    <property type="project" value="UniProtKB-UniRule"/>
</dbReference>
<dbReference type="GO" id="GO:0003723">
    <property type="term" value="F:RNA binding"/>
    <property type="evidence" value="ECO:0007669"/>
    <property type="project" value="UniProtKB-UniRule"/>
</dbReference>
<dbReference type="GO" id="GO:0006402">
    <property type="term" value="P:mRNA catabolic process"/>
    <property type="evidence" value="ECO:0007669"/>
    <property type="project" value="UniProtKB-UniRule"/>
</dbReference>
<dbReference type="GO" id="GO:0006396">
    <property type="term" value="P:RNA processing"/>
    <property type="evidence" value="ECO:0007669"/>
    <property type="project" value="InterPro"/>
</dbReference>
<dbReference type="CDD" id="cd02393">
    <property type="entry name" value="KH-I_PNPase"/>
    <property type="match status" value="1"/>
</dbReference>
<dbReference type="CDD" id="cd11363">
    <property type="entry name" value="RNase_PH_PNPase_1"/>
    <property type="match status" value="1"/>
</dbReference>
<dbReference type="CDD" id="cd11364">
    <property type="entry name" value="RNase_PH_PNPase_2"/>
    <property type="match status" value="1"/>
</dbReference>
<dbReference type="CDD" id="cd04472">
    <property type="entry name" value="S1_PNPase"/>
    <property type="match status" value="1"/>
</dbReference>
<dbReference type="FunFam" id="3.30.1370.10:FF:000001">
    <property type="entry name" value="Polyribonucleotide nucleotidyltransferase"/>
    <property type="match status" value="1"/>
</dbReference>
<dbReference type="FunFam" id="3.30.230.70:FF:000001">
    <property type="entry name" value="Polyribonucleotide nucleotidyltransferase"/>
    <property type="match status" value="1"/>
</dbReference>
<dbReference type="FunFam" id="3.30.230.70:FF:000002">
    <property type="entry name" value="Polyribonucleotide nucleotidyltransferase"/>
    <property type="match status" value="1"/>
</dbReference>
<dbReference type="FunFam" id="2.40.50.140:FF:000189">
    <property type="entry name" value="Polyribonucleotide nucleotidyltransferase, putative"/>
    <property type="match status" value="1"/>
</dbReference>
<dbReference type="Gene3D" id="3.30.230.70">
    <property type="entry name" value="GHMP Kinase, N-terminal domain"/>
    <property type="match status" value="2"/>
</dbReference>
<dbReference type="Gene3D" id="3.30.1370.10">
    <property type="entry name" value="K Homology domain, type 1"/>
    <property type="match status" value="1"/>
</dbReference>
<dbReference type="Gene3D" id="2.40.50.140">
    <property type="entry name" value="Nucleic acid-binding proteins"/>
    <property type="match status" value="1"/>
</dbReference>
<dbReference type="HAMAP" id="MF_01595">
    <property type="entry name" value="PNPase"/>
    <property type="match status" value="1"/>
</dbReference>
<dbReference type="InterPro" id="IPR001247">
    <property type="entry name" value="ExoRNase_PH_dom1"/>
</dbReference>
<dbReference type="InterPro" id="IPR015847">
    <property type="entry name" value="ExoRNase_PH_dom2"/>
</dbReference>
<dbReference type="InterPro" id="IPR036345">
    <property type="entry name" value="ExoRNase_PH_dom2_sf"/>
</dbReference>
<dbReference type="InterPro" id="IPR004087">
    <property type="entry name" value="KH_dom"/>
</dbReference>
<dbReference type="InterPro" id="IPR004088">
    <property type="entry name" value="KH_dom_type_1"/>
</dbReference>
<dbReference type="InterPro" id="IPR036612">
    <property type="entry name" value="KH_dom_type_1_sf"/>
</dbReference>
<dbReference type="InterPro" id="IPR012340">
    <property type="entry name" value="NA-bd_OB-fold"/>
</dbReference>
<dbReference type="InterPro" id="IPR012162">
    <property type="entry name" value="PNPase"/>
</dbReference>
<dbReference type="InterPro" id="IPR027408">
    <property type="entry name" value="PNPase/RNase_PH_dom_sf"/>
</dbReference>
<dbReference type="InterPro" id="IPR015848">
    <property type="entry name" value="PNPase_PH_RNA-bd_bac/org-type"/>
</dbReference>
<dbReference type="InterPro" id="IPR036456">
    <property type="entry name" value="PNPase_PH_RNA-bd_sf"/>
</dbReference>
<dbReference type="InterPro" id="IPR020568">
    <property type="entry name" value="Ribosomal_Su5_D2-typ_SF"/>
</dbReference>
<dbReference type="InterPro" id="IPR003029">
    <property type="entry name" value="S1_domain"/>
</dbReference>
<dbReference type="NCBIfam" id="TIGR03591">
    <property type="entry name" value="polynuc_phos"/>
    <property type="match status" value="1"/>
</dbReference>
<dbReference type="NCBIfam" id="NF008805">
    <property type="entry name" value="PRK11824.1"/>
    <property type="match status" value="1"/>
</dbReference>
<dbReference type="PANTHER" id="PTHR11252">
    <property type="entry name" value="POLYRIBONUCLEOTIDE NUCLEOTIDYLTRANSFERASE"/>
    <property type="match status" value="1"/>
</dbReference>
<dbReference type="PANTHER" id="PTHR11252:SF0">
    <property type="entry name" value="POLYRIBONUCLEOTIDE NUCLEOTIDYLTRANSFERASE 1, MITOCHONDRIAL"/>
    <property type="match status" value="1"/>
</dbReference>
<dbReference type="Pfam" id="PF00013">
    <property type="entry name" value="KH_1"/>
    <property type="match status" value="1"/>
</dbReference>
<dbReference type="Pfam" id="PF03726">
    <property type="entry name" value="PNPase"/>
    <property type="match status" value="1"/>
</dbReference>
<dbReference type="Pfam" id="PF01138">
    <property type="entry name" value="RNase_PH"/>
    <property type="match status" value="2"/>
</dbReference>
<dbReference type="Pfam" id="PF03725">
    <property type="entry name" value="RNase_PH_C"/>
    <property type="match status" value="2"/>
</dbReference>
<dbReference type="Pfam" id="PF00575">
    <property type="entry name" value="S1"/>
    <property type="match status" value="1"/>
</dbReference>
<dbReference type="PIRSF" id="PIRSF005499">
    <property type="entry name" value="PNPase"/>
    <property type="match status" value="1"/>
</dbReference>
<dbReference type="SMART" id="SM00322">
    <property type="entry name" value="KH"/>
    <property type="match status" value="1"/>
</dbReference>
<dbReference type="SMART" id="SM00316">
    <property type="entry name" value="S1"/>
    <property type="match status" value="1"/>
</dbReference>
<dbReference type="SUPFAM" id="SSF54791">
    <property type="entry name" value="Eukaryotic type KH-domain (KH-domain type I)"/>
    <property type="match status" value="1"/>
</dbReference>
<dbReference type="SUPFAM" id="SSF50249">
    <property type="entry name" value="Nucleic acid-binding proteins"/>
    <property type="match status" value="1"/>
</dbReference>
<dbReference type="SUPFAM" id="SSF46915">
    <property type="entry name" value="Polynucleotide phosphorylase/guanosine pentaphosphate synthase (PNPase/GPSI), domain 3"/>
    <property type="match status" value="1"/>
</dbReference>
<dbReference type="SUPFAM" id="SSF55666">
    <property type="entry name" value="Ribonuclease PH domain 2-like"/>
    <property type="match status" value="2"/>
</dbReference>
<dbReference type="SUPFAM" id="SSF54211">
    <property type="entry name" value="Ribosomal protein S5 domain 2-like"/>
    <property type="match status" value="2"/>
</dbReference>
<dbReference type="PROSITE" id="PS50084">
    <property type="entry name" value="KH_TYPE_1"/>
    <property type="match status" value="1"/>
</dbReference>
<dbReference type="PROSITE" id="PS50126">
    <property type="entry name" value="S1"/>
    <property type="match status" value="1"/>
</dbReference>
<protein>
    <recommendedName>
        <fullName evidence="1">Polyribonucleotide nucleotidyltransferase</fullName>
        <ecNumber evidence="1">2.7.7.8</ecNumber>
    </recommendedName>
    <alternativeName>
        <fullName evidence="1">Polynucleotide phosphorylase</fullName>
        <shortName evidence="1">PNPase</shortName>
    </alternativeName>
</protein>
<keyword id="KW-0963">Cytoplasm</keyword>
<keyword id="KW-0460">Magnesium</keyword>
<keyword id="KW-0479">Metal-binding</keyword>
<keyword id="KW-0548">Nucleotidyltransferase</keyword>
<keyword id="KW-0694">RNA-binding</keyword>
<keyword id="KW-0808">Transferase</keyword>